<dbReference type="EC" id="6.2.1.1" evidence="1"/>
<dbReference type="EMBL" id="CP001322">
    <property type="protein sequence ID" value="ACL04022.1"/>
    <property type="molecule type" value="Genomic_DNA"/>
</dbReference>
<dbReference type="RefSeq" id="WP_015947096.1">
    <property type="nucleotide sequence ID" value="NC_011768.1"/>
</dbReference>
<dbReference type="SMR" id="B8FIN2"/>
<dbReference type="KEGG" id="dal:Dalk_2329"/>
<dbReference type="eggNOG" id="COG0365">
    <property type="taxonomic scope" value="Bacteria"/>
</dbReference>
<dbReference type="HOGENOM" id="CLU_000022_3_6_7"/>
<dbReference type="Proteomes" id="UP000000739">
    <property type="component" value="Chromosome"/>
</dbReference>
<dbReference type="GO" id="GO:0005829">
    <property type="term" value="C:cytosol"/>
    <property type="evidence" value="ECO:0007669"/>
    <property type="project" value="TreeGrafter"/>
</dbReference>
<dbReference type="GO" id="GO:0003987">
    <property type="term" value="F:acetate-CoA ligase activity"/>
    <property type="evidence" value="ECO:0007669"/>
    <property type="project" value="UniProtKB-UniRule"/>
</dbReference>
<dbReference type="GO" id="GO:0016208">
    <property type="term" value="F:AMP binding"/>
    <property type="evidence" value="ECO:0007669"/>
    <property type="project" value="InterPro"/>
</dbReference>
<dbReference type="GO" id="GO:0005524">
    <property type="term" value="F:ATP binding"/>
    <property type="evidence" value="ECO:0007669"/>
    <property type="project" value="UniProtKB-KW"/>
</dbReference>
<dbReference type="GO" id="GO:0046872">
    <property type="term" value="F:metal ion binding"/>
    <property type="evidence" value="ECO:0007669"/>
    <property type="project" value="UniProtKB-KW"/>
</dbReference>
<dbReference type="GO" id="GO:0019427">
    <property type="term" value="P:acetyl-CoA biosynthetic process from acetate"/>
    <property type="evidence" value="ECO:0007669"/>
    <property type="project" value="InterPro"/>
</dbReference>
<dbReference type="CDD" id="cd05966">
    <property type="entry name" value="ACS"/>
    <property type="match status" value="1"/>
</dbReference>
<dbReference type="FunFam" id="3.30.300.30:FF:000004">
    <property type="entry name" value="Acetyl-coenzyme A synthetase"/>
    <property type="match status" value="1"/>
</dbReference>
<dbReference type="FunFam" id="3.40.50.12780:FF:000001">
    <property type="entry name" value="Acetyl-coenzyme A synthetase"/>
    <property type="match status" value="1"/>
</dbReference>
<dbReference type="Gene3D" id="3.30.300.30">
    <property type="match status" value="1"/>
</dbReference>
<dbReference type="Gene3D" id="3.40.50.12780">
    <property type="entry name" value="N-terminal domain of ligase-like"/>
    <property type="match status" value="1"/>
</dbReference>
<dbReference type="HAMAP" id="MF_01123">
    <property type="entry name" value="Ac_CoA_synth"/>
    <property type="match status" value="1"/>
</dbReference>
<dbReference type="InterPro" id="IPR011904">
    <property type="entry name" value="Ac_CoA_lig"/>
</dbReference>
<dbReference type="InterPro" id="IPR032387">
    <property type="entry name" value="ACAS_N"/>
</dbReference>
<dbReference type="InterPro" id="IPR025110">
    <property type="entry name" value="AMP-bd_C"/>
</dbReference>
<dbReference type="InterPro" id="IPR045851">
    <property type="entry name" value="AMP-bd_C_sf"/>
</dbReference>
<dbReference type="InterPro" id="IPR020845">
    <property type="entry name" value="AMP-binding_CS"/>
</dbReference>
<dbReference type="InterPro" id="IPR000873">
    <property type="entry name" value="AMP-dep_synth/lig_dom"/>
</dbReference>
<dbReference type="InterPro" id="IPR042099">
    <property type="entry name" value="ANL_N_sf"/>
</dbReference>
<dbReference type="NCBIfam" id="TIGR02188">
    <property type="entry name" value="Ac_CoA_lig_AcsA"/>
    <property type="match status" value="1"/>
</dbReference>
<dbReference type="NCBIfam" id="NF001208">
    <property type="entry name" value="PRK00174.1"/>
    <property type="match status" value="1"/>
</dbReference>
<dbReference type="PANTHER" id="PTHR24095">
    <property type="entry name" value="ACETYL-COENZYME A SYNTHETASE"/>
    <property type="match status" value="1"/>
</dbReference>
<dbReference type="PANTHER" id="PTHR24095:SF14">
    <property type="entry name" value="ACETYL-COENZYME A SYNTHETASE 1"/>
    <property type="match status" value="1"/>
</dbReference>
<dbReference type="Pfam" id="PF16177">
    <property type="entry name" value="ACAS_N"/>
    <property type="match status" value="1"/>
</dbReference>
<dbReference type="Pfam" id="PF00501">
    <property type="entry name" value="AMP-binding"/>
    <property type="match status" value="1"/>
</dbReference>
<dbReference type="Pfam" id="PF13193">
    <property type="entry name" value="AMP-binding_C"/>
    <property type="match status" value="1"/>
</dbReference>
<dbReference type="SUPFAM" id="SSF56801">
    <property type="entry name" value="Acetyl-CoA synthetase-like"/>
    <property type="match status" value="1"/>
</dbReference>
<dbReference type="PROSITE" id="PS00455">
    <property type="entry name" value="AMP_BINDING"/>
    <property type="match status" value="1"/>
</dbReference>
<keyword id="KW-0007">Acetylation</keyword>
<keyword id="KW-0067">ATP-binding</keyword>
<keyword id="KW-0436">Ligase</keyword>
<keyword id="KW-0460">Magnesium</keyword>
<keyword id="KW-0479">Metal-binding</keyword>
<keyword id="KW-0547">Nucleotide-binding</keyword>
<keyword id="KW-1185">Reference proteome</keyword>
<proteinExistence type="inferred from homology"/>
<protein>
    <recommendedName>
        <fullName evidence="1">Acetyl-coenzyme A synthetase</fullName>
        <shortName evidence="1">AcCoA synthetase</shortName>
        <shortName evidence="1">Acs</shortName>
        <ecNumber evidence="1">6.2.1.1</ecNumber>
    </recommendedName>
    <alternativeName>
        <fullName evidence="1">Acetate--CoA ligase</fullName>
    </alternativeName>
    <alternativeName>
        <fullName evidence="1">Acyl-activating enzyme</fullName>
    </alternativeName>
</protein>
<comment type="function">
    <text evidence="1">Catalyzes the conversion of acetate into acetyl-CoA (AcCoA), an essential intermediate at the junction of anabolic and catabolic pathways. AcsA undergoes a two-step reaction. In the first half reaction, AcsA combines acetate with ATP to form acetyl-adenylate (AcAMP) intermediate. In the second half reaction, it can then transfer the acetyl group from AcAMP to the sulfhydryl group of CoA, forming the product AcCoA.</text>
</comment>
<comment type="catalytic activity">
    <reaction evidence="1">
        <text>acetate + ATP + CoA = acetyl-CoA + AMP + diphosphate</text>
        <dbReference type="Rhea" id="RHEA:23176"/>
        <dbReference type="ChEBI" id="CHEBI:30089"/>
        <dbReference type="ChEBI" id="CHEBI:30616"/>
        <dbReference type="ChEBI" id="CHEBI:33019"/>
        <dbReference type="ChEBI" id="CHEBI:57287"/>
        <dbReference type="ChEBI" id="CHEBI:57288"/>
        <dbReference type="ChEBI" id="CHEBI:456215"/>
        <dbReference type="EC" id="6.2.1.1"/>
    </reaction>
</comment>
<comment type="cofactor">
    <cofactor evidence="1">
        <name>Mg(2+)</name>
        <dbReference type="ChEBI" id="CHEBI:18420"/>
    </cofactor>
</comment>
<comment type="PTM">
    <text evidence="1">Acetylated. Deacetylation by the SIR2-homolog deacetylase activates the enzyme.</text>
</comment>
<comment type="similarity">
    <text evidence="1">Belongs to the ATP-dependent AMP-binding enzyme family.</text>
</comment>
<organism>
    <name type="scientific">Desulfatibacillum aliphaticivorans</name>
    <dbReference type="NCBI Taxonomy" id="218208"/>
    <lineage>
        <taxon>Bacteria</taxon>
        <taxon>Pseudomonadati</taxon>
        <taxon>Thermodesulfobacteriota</taxon>
        <taxon>Desulfobacteria</taxon>
        <taxon>Desulfobacterales</taxon>
        <taxon>Desulfatibacillaceae</taxon>
        <taxon>Desulfatibacillum</taxon>
    </lineage>
</organism>
<evidence type="ECO:0000255" key="1">
    <source>
        <dbReference type="HAMAP-Rule" id="MF_01123"/>
    </source>
</evidence>
<feature type="chain" id="PRO_1000137263" description="Acetyl-coenzyme A synthetase">
    <location>
        <begin position="1"/>
        <end position="646"/>
    </location>
</feature>
<feature type="binding site" evidence="1">
    <location>
        <begin position="189"/>
        <end position="192"/>
    </location>
    <ligand>
        <name>CoA</name>
        <dbReference type="ChEBI" id="CHEBI:57287"/>
    </ligand>
</feature>
<feature type="binding site" evidence="1">
    <location>
        <position position="307"/>
    </location>
    <ligand>
        <name>CoA</name>
        <dbReference type="ChEBI" id="CHEBI:57287"/>
    </ligand>
</feature>
<feature type="binding site" evidence="1">
    <location>
        <position position="331"/>
    </location>
    <ligand>
        <name>CoA</name>
        <dbReference type="ChEBI" id="CHEBI:57287"/>
    </ligand>
</feature>
<feature type="binding site" evidence="1">
    <location>
        <begin position="383"/>
        <end position="385"/>
    </location>
    <ligand>
        <name>ATP</name>
        <dbReference type="ChEBI" id="CHEBI:30616"/>
    </ligand>
</feature>
<feature type="binding site" evidence="1">
    <location>
        <begin position="407"/>
        <end position="412"/>
    </location>
    <ligand>
        <name>ATP</name>
        <dbReference type="ChEBI" id="CHEBI:30616"/>
    </ligand>
</feature>
<feature type="binding site" evidence="1">
    <location>
        <position position="496"/>
    </location>
    <ligand>
        <name>ATP</name>
        <dbReference type="ChEBI" id="CHEBI:30616"/>
    </ligand>
</feature>
<feature type="binding site" evidence="1">
    <location>
        <position position="511"/>
    </location>
    <ligand>
        <name>ATP</name>
        <dbReference type="ChEBI" id="CHEBI:30616"/>
    </ligand>
</feature>
<feature type="binding site" evidence="1">
    <location>
        <position position="519"/>
    </location>
    <ligand>
        <name>CoA</name>
        <dbReference type="ChEBI" id="CHEBI:57287"/>
    </ligand>
</feature>
<feature type="binding site" evidence="1">
    <location>
        <position position="522"/>
    </location>
    <ligand>
        <name>ATP</name>
        <dbReference type="ChEBI" id="CHEBI:30616"/>
    </ligand>
</feature>
<feature type="binding site" evidence="1">
    <location>
        <position position="533"/>
    </location>
    <ligand>
        <name>Mg(2+)</name>
        <dbReference type="ChEBI" id="CHEBI:18420"/>
    </ligand>
</feature>
<feature type="binding site" evidence="1">
    <location>
        <position position="535"/>
    </location>
    <ligand>
        <name>Mg(2+)</name>
        <dbReference type="ChEBI" id="CHEBI:18420"/>
    </ligand>
</feature>
<feature type="binding site" evidence="1">
    <location>
        <position position="538"/>
    </location>
    <ligand>
        <name>Mg(2+)</name>
        <dbReference type="ChEBI" id="CHEBI:18420"/>
    </ligand>
</feature>
<feature type="binding site" evidence="1">
    <location>
        <position position="580"/>
    </location>
    <ligand>
        <name>CoA</name>
        <dbReference type="ChEBI" id="CHEBI:57287"/>
    </ligand>
</feature>
<feature type="modified residue" description="N6-acetyllysine" evidence="1">
    <location>
        <position position="605"/>
    </location>
</feature>
<reference key="1">
    <citation type="journal article" date="2012" name="Environ. Microbiol.">
        <title>The genome sequence of Desulfatibacillum alkenivorans AK-01: a blueprint for anaerobic alkane oxidation.</title>
        <authorList>
            <person name="Callaghan A.V."/>
            <person name="Morris B.E."/>
            <person name="Pereira I.A."/>
            <person name="McInerney M.J."/>
            <person name="Austin R.N."/>
            <person name="Groves J.T."/>
            <person name="Kukor J.J."/>
            <person name="Suflita J.M."/>
            <person name="Young L.Y."/>
            <person name="Zylstra G.J."/>
            <person name="Wawrik B."/>
        </authorList>
    </citation>
    <scope>NUCLEOTIDE SEQUENCE [LARGE SCALE GENOMIC DNA]</scope>
    <source>
        <strain>AK-01</strain>
    </source>
</reference>
<gene>
    <name evidence="1" type="primary">acsA</name>
    <name type="ordered locus">Dalk_2329</name>
</gene>
<sequence length="646" mass="72114">MSNNLFTVPEDWQKRAWCDDARYQKMYDESVNDPDAFWSREAQRIDWFEPFSKVKNSSFNGDVDIKWFLDGKLNVAYNCLDRHLEKRGDQTAIIFEGNEPGVEEKITYRQLYERVCRFSNVLKSCGVKKGDRVSIYLPMIPQLAVAMLACARIGAIHSIVFAGFSPDALANRITDAECTILITADEGLRGPKAIGLKEAADEAMDKAGMVKKCIVVKHTGADVPMKAGRDLWWHELTAKESTECPPESMDSEDPLFILYTSGSTGTPKGVLHTTGGYIVYTSLTHQYVFDYHDGDIYWCTADIGWVTGHSYIIYGPLANGAVTIMFEGIPNYPDFSRFWQICDKHQVNIFYTAPTVVRALMQQGDEPVKATSRTSVRLLGTVGEPINPEAWLWYHRVVGEERCPIVDTWWQTETGGIMITPLPGATALKPGSATRPFFGIQPALIDKEGNQLEGPGEGYLVMLDSWPALARTVYGDHRRFKSTYFIQCPGTYFSGDGARRDEDGYYWITGRIDDVINVSGHRLGTAEIESSLVAHPAVSEAAVVGFPHDIKGQAIYAYVTLSSGYEPSEELRKELSLFVRKDIGPIATPEVLQFTDSLPKTRSGKIMRRILRKVACNELDNLGDTSTLADPAVVEALIKNRIDACR</sequence>
<accession>B8FIN2</accession>
<name>ACSA_DESAL</name>